<evidence type="ECO:0000255" key="1">
    <source>
        <dbReference type="HAMAP-Rule" id="MF_00034"/>
    </source>
</evidence>
<reference key="1">
    <citation type="journal article" date="2006" name="Proc. Natl. Acad. Sci. U.S.A.">
        <title>Evolution of sensory complexity recorded in a myxobacterial genome.</title>
        <authorList>
            <person name="Goldman B.S."/>
            <person name="Nierman W.C."/>
            <person name="Kaiser D."/>
            <person name="Slater S.C."/>
            <person name="Durkin A.S."/>
            <person name="Eisen J.A."/>
            <person name="Ronning C.M."/>
            <person name="Barbazuk W.B."/>
            <person name="Blanchard M."/>
            <person name="Field C."/>
            <person name="Halling C."/>
            <person name="Hinkle G."/>
            <person name="Iartchuk O."/>
            <person name="Kim H.S."/>
            <person name="Mackenzie C."/>
            <person name="Madupu R."/>
            <person name="Miller N."/>
            <person name="Shvartsbeyn A."/>
            <person name="Sullivan S.A."/>
            <person name="Vaudin M."/>
            <person name="Wiegand R."/>
            <person name="Kaplan H.B."/>
        </authorList>
    </citation>
    <scope>NUCLEOTIDE SEQUENCE [LARGE SCALE GENOMIC DNA]</scope>
    <source>
        <strain>DK1622</strain>
    </source>
</reference>
<name>RUVC_MYXXD</name>
<feature type="chain" id="PRO_1000071033" description="Crossover junction endodeoxyribonuclease RuvC">
    <location>
        <begin position="1"/>
        <end position="191"/>
    </location>
</feature>
<feature type="active site" evidence="1">
    <location>
        <position position="7"/>
    </location>
</feature>
<feature type="active site" evidence="1">
    <location>
        <position position="67"/>
    </location>
</feature>
<feature type="active site" evidence="1">
    <location>
        <position position="141"/>
    </location>
</feature>
<feature type="binding site" evidence="1">
    <location>
        <position position="7"/>
    </location>
    <ligand>
        <name>Mg(2+)</name>
        <dbReference type="ChEBI" id="CHEBI:18420"/>
        <label>1</label>
    </ligand>
</feature>
<feature type="binding site" evidence="1">
    <location>
        <position position="67"/>
    </location>
    <ligand>
        <name>Mg(2+)</name>
        <dbReference type="ChEBI" id="CHEBI:18420"/>
        <label>2</label>
    </ligand>
</feature>
<feature type="binding site" evidence="1">
    <location>
        <position position="141"/>
    </location>
    <ligand>
        <name>Mg(2+)</name>
        <dbReference type="ChEBI" id="CHEBI:18420"/>
        <label>1</label>
    </ligand>
</feature>
<accession>Q1D2J4</accession>
<proteinExistence type="inferred from homology"/>
<gene>
    <name evidence="1" type="primary">ruvC</name>
    <name type="ordered locus">MXAN_4973</name>
</gene>
<dbReference type="EC" id="3.1.21.10" evidence="1"/>
<dbReference type="EMBL" id="CP000113">
    <property type="protein sequence ID" value="ABF86200.1"/>
    <property type="molecule type" value="Genomic_DNA"/>
</dbReference>
<dbReference type="RefSeq" id="WP_011554951.1">
    <property type="nucleotide sequence ID" value="NC_008095.1"/>
</dbReference>
<dbReference type="SMR" id="Q1D2J4"/>
<dbReference type="STRING" id="246197.MXAN_4973"/>
<dbReference type="EnsemblBacteria" id="ABF86200">
    <property type="protein sequence ID" value="ABF86200"/>
    <property type="gene ID" value="MXAN_4973"/>
</dbReference>
<dbReference type="GeneID" id="41362258"/>
<dbReference type="KEGG" id="mxa:MXAN_4973"/>
<dbReference type="eggNOG" id="COG0817">
    <property type="taxonomic scope" value="Bacteria"/>
</dbReference>
<dbReference type="HOGENOM" id="CLU_091257_2_1_7"/>
<dbReference type="OrthoDB" id="9805499at2"/>
<dbReference type="Proteomes" id="UP000002402">
    <property type="component" value="Chromosome"/>
</dbReference>
<dbReference type="GO" id="GO:0005737">
    <property type="term" value="C:cytoplasm"/>
    <property type="evidence" value="ECO:0007669"/>
    <property type="project" value="UniProtKB-SubCell"/>
</dbReference>
<dbReference type="GO" id="GO:0048476">
    <property type="term" value="C:Holliday junction resolvase complex"/>
    <property type="evidence" value="ECO:0007669"/>
    <property type="project" value="UniProtKB-UniRule"/>
</dbReference>
<dbReference type="GO" id="GO:0008821">
    <property type="term" value="F:crossover junction DNA endonuclease activity"/>
    <property type="evidence" value="ECO:0007669"/>
    <property type="project" value="UniProtKB-UniRule"/>
</dbReference>
<dbReference type="GO" id="GO:0003677">
    <property type="term" value="F:DNA binding"/>
    <property type="evidence" value="ECO:0007669"/>
    <property type="project" value="UniProtKB-KW"/>
</dbReference>
<dbReference type="GO" id="GO:0000287">
    <property type="term" value="F:magnesium ion binding"/>
    <property type="evidence" value="ECO:0007669"/>
    <property type="project" value="UniProtKB-UniRule"/>
</dbReference>
<dbReference type="GO" id="GO:0006310">
    <property type="term" value="P:DNA recombination"/>
    <property type="evidence" value="ECO:0007669"/>
    <property type="project" value="UniProtKB-UniRule"/>
</dbReference>
<dbReference type="GO" id="GO:0006281">
    <property type="term" value="P:DNA repair"/>
    <property type="evidence" value="ECO:0007669"/>
    <property type="project" value="UniProtKB-UniRule"/>
</dbReference>
<dbReference type="CDD" id="cd16962">
    <property type="entry name" value="RuvC"/>
    <property type="match status" value="1"/>
</dbReference>
<dbReference type="FunFam" id="3.30.420.10:FF:000002">
    <property type="entry name" value="Crossover junction endodeoxyribonuclease RuvC"/>
    <property type="match status" value="1"/>
</dbReference>
<dbReference type="Gene3D" id="3.30.420.10">
    <property type="entry name" value="Ribonuclease H-like superfamily/Ribonuclease H"/>
    <property type="match status" value="1"/>
</dbReference>
<dbReference type="HAMAP" id="MF_00034">
    <property type="entry name" value="RuvC"/>
    <property type="match status" value="1"/>
</dbReference>
<dbReference type="InterPro" id="IPR012337">
    <property type="entry name" value="RNaseH-like_sf"/>
</dbReference>
<dbReference type="InterPro" id="IPR036397">
    <property type="entry name" value="RNaseH_sf"/>
</dbReference>
<dbReference type="InterPro" id="IPR002176">
    <property type="entry name" value="X-over_junc_endoDNase_RuvC"/>
</dbReference>
<dbReference type="NCBIfam" id="TIGR00228">
    <property type="entry name" value="ruvC"/>
    <property type="match status" value="1"/>
</dbReference>
<dbReference type="PANTHER" id="PTHR30194">
    <property type="entry name" value="CROSSOVER JUNCTION ENDODEOXYRIBONUCLEASE RUVC"/>
    <property type="match status" value="1"/>
</dbReference>
<dbReference type="PANTHER" id="PTHR30194:SF3">
    <property type="entry name" value="CROSSOVER JUNCTION ENDODEOXYRIBONUCLEASE RUVC"/>
    <property type="match status" value="1"/>
</dbReference>
<dbReference type="Pfam" id="PF02075">
    <property type="entry name" value="RuvC"/>
    <property type="match status" value="1"/>
</dbReference>
<dbReference type="PRINTS" id="PR00696">
    <property type="entry name" value="RSOLVASERUVC"/>
</dbReference>
<dbReference type="SUPFAM" id="SSF53098">
    <property type="entry name" value="Ribonuclease H-like"/>
    <property type="match status" value="1"/>
</dbReference>
<organism>
    <name type="scientific">Myxococcus xanthus (strain DK1622)</name>
    <dbReference type="NCBI Taxonomy" id="246197"/>
    <lineage>
        <taxon>Bacteria</taxon>
        <taxon>Pseudomonadati</taxon>
        <taxon>Myxococcota</taxon>
        <taxon>Myxococcia</taxon>
        <taxon>Myxococcales</taxon>
        <taxon>Cystobacterineae</taxon>
        <taxon>Myxococcaceae</taxon>
        <taxon>Myxococcus</taxon>
    </lineage>
</organism>
<protein>
    <recommendedName>
        <fullName evidence="1">Crossover junction endodeoxyribonuclease RuvC</fullName>
        <ecNumber evidence="1">3.1.21.10</ecNumber>
    </recommendedName>
    <alternativeName>
        <fullName evidence="1">Holliday junction nuclease RuvC</fullName>
    </alternativeName>
    <alternativeName>
        <fullName evidence="1">Holliday junction resolvase RuvC</fullName>
    </alternativeName>
</protein>
<comment type="function">
    <text evidence="1">The RuvA-RuvB-RuvC complex processes Holliday junction (HJ) DNA during genetic recombination and DNA repair. Endonuclease that resolves HJ intermediates. Cleaves cruciform DNA by making single-stranded nicks across the HJ at symmetrical positions within the homologous arms, yielding a 5'-phosphate and a 3'-hydroxyl group; requires a central core of homology in the junction. The consensus cleavage sequence is 5'-(A/T)TT(C/G)-3'. Cleavage occurs on the 3'-side of the TT dinucleotide at the point of strand exchange. HJ branch migration catalyzed by RuvA-RuvB allows RuvC to scan DNA until it finds its consensus sequence, where it cleaves and resolves the cruciform DNA.</text>
</comment>
<comment type="catalytic activity">
    <reaction evidence="1">
        <text>Endonucleolytic cleavage at a junction such as a reciprocal single-stranded crossover between two homologous DNA duplexes (Holliday junction).</text>
        <dbReference type="EC" id="3.1.21.10"/>
    </reaction>
</comment>
<comment type="cofactor">
    <cofactor evidence="1">
        <name>Mg(2+)</name>
        <dbReference type="ChEBI" id="CHEBI:18420"/>
    </cofactor>
    <text evidence="1">Binds 2 Mg(2+) ion per subunit.</text>
</comment>
<comment type="subunit">
    <text evidence="1">Homodimer which binds Holliday junction (HJ) DNA. The HJ becomes 2-fold symmetrical on binding to RuvC with unstacked arms; it has a different conformation from HJ DNA in complex with RuvA. In the full resolvosome a probable DNA-RuvA(4)-RuvB(12)-RuvC(2) complex forms which resolves the HJ.</text>
</comment>
<comment type="subcellular location">
    <subcellularLocation>
        <location evidence="1">Cytoplasm</location>
    </subcellularLocation>
</comment>
<comment type="similarity">
    <text evidence="1">Belongs to the RuvC family.</text>
</comment>
<sequence length="191" mass="19826">MRVLGVDPGSRFMGFGVVEEKRGRLVHVGHGVIKGDPALPLSDRLRDLHGALTAALVKYRPAAVAVEGVFTFRNARSALVLGHARGVALLAAAQAGLPVFEYAPAKVKKAVGAGGADGKDAVARMVRTFLELDASVLERADASDALAVALCHLNHGRAAVPAASASGKKRKGAAALLADRLAPAYRRPEAR</sequence>
<keyword id="KW-0963">Cytoplasm</keyword>
<keyword id="KW-0227">DNA damage</keyword>
<keyword id="KW-0233">DNA recombination</keyword>
<keyword id="KW-0234">DNA repair</keyword>
<keyword id="KW-0238">DNA-binding</keyword>
<keyword id="KW-0255">Endonuclease</keyword>
<keyword id="KW-0378">Hydrolase</keyword>
<keyword id="KW-0460">Magnesium</keyword>
<keyword id="KW-0479">Metal-binding</keyword>
<keyword id="KW-0540">Nuclease</keyword>
<keyword id="KW-1185">Reference proteome</keyword>